<reference key="1">
    <citation type="journal article" date="1997" name="Biochim. Biophys. Acta">
        <title>Isolation of chicken alpha ENaC splice variants from a cochlear cDNA library.</title>
        <authorList>
            <person name="Killick R."/>
            <person name="Richardson G."/>
        </authorList>
    </citation>
    <scope>NUCLEOTIDE SEQUENCE [MRNA] (ISOFORMS LONG AND SHORT)</scope>
    <scope>TISSUE SPECIFICITY</scope>
    <source>
        <strain>Isa brown</strain>
        <tissue>Cochlea</tissue>
    </source>
</reference>
<reference key="2">
    <citation type="submission" date="1996-07" db="EMBL/GenBank/DDBJ databases">
        <authorList>
            <person name="Goldstein O."/>
            <person name="Asher C."/>
            <person name="Garty H."/>
        </authorList>
    </citation>
    <scope>NUCLEOTIDE SEQUENCE [MRNA] (ISOFORM 3)</scope>
    <source>
        <tissue>Intestine</tissue>
    </source>
</reference>
<feature type="chain" id="PRO_0000181265" description="Epithelial sodium channel subunit alpha">
    <location>
        <begin position="1"/>
        <end position="637"/>
    </location>
</feature>
<feature type="topological domain" description="Cytoplasmic" evidence="2">
    <location>
        <begin position="1"/>
        <end position="76"/>
    </location>
</feature>
<feature type="transmembrane region" description="Helical; Name=1" evidence="3">
    <location>
        <begin position="77"/>
        <end position="97"/>
    </location>
</feature>
<feature type="topological domain" description="Extracellular" evidence="2">
    <location>
        <begin position="98"/>
        <end position="548"/>
    </location>
</feature>
<feature type="transmembrane region" description="Helical; Name=2" evidence="3">
    <location>
        <begin position="549"/>
        <end position="569"/>
    </location>
</feature>
<feature type="topological domain" description="Cytoplasmic" evidence="2">
    <location>
        <begin position="570"/>
        <end position="637"/>
    </location>
</feature>
<feature type="region of interest" description="Disordered" evidence="4">
    <location>
        <begin position="1"/>
        <end position="34"/>
    </location>
</feature>
<feature type="compositionally biased region" description="Basic and acidic residues" evidence="4">
    <location>
        <begin position="11"/>
        <end position="34"/>
    </location>
</feature>
<feature type="disulfide bond" evidence="1">
    <location>
        <begin position="125"/>
        <end position="292"/>
    </location>
</feature>
<feature type="disulfide bond" evidence="1">
    <location>
        <begin position="217"/>
        <end position="224"/>
    </location>
</feature>
<feature type="disulfide bond" evidence="1">
    <location>
        <begin position="269"/>
        <end position="276"/>
    </location>
</feature>
<feature type="disulfide bond" evidence="1">
    <location>
        <begin position="380"/>
        <end position="465"/>
    </location>
</feature>
<feature type="disulfide bond" evidence="1">
    <location>
        <begin position="402"/>
        <end position="461"/>
    </location>
</feature>
<feature type="disulfide bond" evidence="1">
    <location>
        <begin position="402"/>
        <end position="442"/>
    </location>
</feature>
<feature type="disulfide bond" evidence="1">
    <location>
        <begin position="406"/>
        <end position="457"/>
    </location>
</feature>
<feature type="disulfide bond" evidence="1">
    <location>
        <begin position="415"/>
        <end position="465"/>
    </location>
</feature>
<feature type="disulfide bond" evidence="1">
    <location>
        <begin position="415"/>
        <end position="442"/>
    </location>
</feature>
<feature type="disulfide bond" evidence="1">
    <location>
        <begin position="417"/>
        <end position="431"/>
    </location>
</feature>
<feature type="splice variant" id="VSP_057562" description="In isoform 3.">
    <location>
        <begin position="1"/>
        <end position="14"/>
    </location>
</feature>
<feature type="splice variant" id="VSP_006196" description="In isoform Short." evidence="6">
    <original>CIRSCFQLNMVKRCSCAYYFYPLPDGAEYCDYT</original>
    <variation>TCDHQFRASFFASFPGMLQSPNSRACPRAMLIR</variation>
    <location>
        <begin position="402"/>
        <end position="434"/>
    </location>
</feature>
<feature type="splice variant" id="VSP_006197" description="In isoform Short." evidence="6">
    <location>
        <begin position="435"/>
        <end position="637"/>
    </location>
</feature>
<feature type="sequence conflict" description="In Ref. 2; AAB04954." evidence="7" ref="2">
    <original>DV</original>
    <variation>EL</variation>
    <location>
        <begin position="49"/>
        <end position="50"/>
    </location>
</feature>
<feature type="sequence conflict" description="In Ref. 2; AAB04954." evidence="7" ref="2">
    <original>Q</original>
    <variation>R</variation>
    <location>
        <position position="578"/>
    </location>
</feature>
<sequence>MGTASRGGSVKAEKMPEGEKTRQCKQETEQQQKEDEREGLIEFYGSYQDVFQFFCSNTTIHGAIRLVCSKKNKMKTAFWSVLFILTFGLMYWQFGILYREYFSYPVNLNLNLNSDRLTFPAVTLCTLNPYRYSAIRKKLDELDQITHQTLLDLYDYNMSLARSDGSAQFSHRRTSRSLLHHVQRHPLRRQKRDNLVSLPENSPSVDKNDWKIGFVLCSENNEDCFHQTYSSGVDAVREWYSFHYINILAQMPDAKDLDESDFENFIYACRFNEATCDKANYTHFHHPLYGNCYTFNDNSSSLWTSSLPGINNGLSLVVRTEQNDFIPLLSTVTGARVMVHDQNEPAFMDDGGFNVRPGIETSISMRKEMTERLGGSYSDCTEDGSDVPVQNLYSSRYTEQVCIRSCFQLNMVKRCSCAYYFYPLPDGAEYCDYTKHVAWGYCYYKLLAEFKADVLGCFHKCRKPCKMTEYQLSAGYSRWPSAVSEDWVFYMLSQQNKYNITSKRNGVAKVNIFFEEWNYKTNGESPAFTVVTLLSQLGNQWSLWFGSSVLSVMELAELILDFTVITFILAFRWFRSKQWHSSPAPPPNSHDNTAFQDEASGLDAPHRFTVEAVVTTLPSYNSLEPCGPSKDGETGLE</sequence>
<evidence type="ECO:0000250" key="1">
    <source>
        <dbReference type="UniProtKB" id="P37088"/>
    </source>
</evidence>
<evidence type="ECO:0000250" key="2">
    <source>
        <dbReference type="UniProtKB" id="P37089"/>
    </source>
</evidence>
<evidence type="ECO:0000255" key="3"/>
<evidence type="ECO:0000256" key="4">
    <source>
        <dbReference type="SAM" id="MobiDB-lite"/>
    </source>
</evidence>
<evidence type="ECO:0000269" key="5">
    <source>
    </source>
</evidence>
<evidence type="ECO:0000303" key="6">
    <source>
    </source>
</evidence>
<evidence type="ECO:0000305" key="7"/>
<evidence type="ECO:0000305" key="8">
    <source>
    </source>
</evidence>
<protein>
    <recommendedName>
        <fullName evidence="8">Epithelial sodium channel subunit alpha</fullName>
        <shortName evidence="8">Alpha-ENaC</shortName>
        <shortName>Epithelial Na(+) channel subunit alpha</shortName>
    </recommendedName>
    <alternativeName>
        <fullName>Alpha-NaCH</fullName>
    </alternativeName>
    <alternativeName>
        <fullName evidence="8">Amiloride-sensitive sodium channel subunit alpha</fullName>
    </alternativeName>
    <alternativeName>
        <fullName>Nonvoltage-gated sodium channel 1 subunit alpha</fullName>
    </alternativeName>
    <alternativeName>
        <fullName>SCNEA</fullName>
    </alternativeName>
</protein>
<proteinExistence type="evidence at transcript level"/>
<accession>Q92075</accession>
<accession>P70095</accession>
<accession>Q98941</accession>
<comment type="function">
    <text evidence="1">This is one of the three pore-forming subunits of the heterotrimeric epithelial sodium channel (ENaC), a critical regulator of sodium balance and fluid homeostasis. ENaC operates in epithelial tissues, where it mediates the electrodiffusion of sodium ions from extracellular fluid through the apical membrane of cells, with water following osmotically.</text>
</comment>
<comment type="catalytic activity">
    <reaction evidence="1">
        <text>Na(+)(in) = Na(+)(out)</text>
        <dbReference type="Rhea" id="RHEA:34963"/>
        <dbReference type="ChEBI" id="CHEBI:29101"/>
    </reaction>
</comment>
<comment type="activity regulation">
    <text evidence="1">Originally identified and characterized by its inhibition by the diuretic drug amiloride.</text>
</comment>
<comment type="subunit">
    <text evidence="1">Heterotrimer; containing an alpha/SCNN1A, a beta/SCNN1B and a gamma/SCNN1G subunit.</text>
</comment>
<comment type="subcellular location">
    <subcellularLocation>
        <location evidence="2">Apical cell membrane</location>
        <topology evidence="2">Multi-pass membrane protein</topology>
    </subcellularLocation>
    <subcellularLocation>
        <location evidence="1">Cell projection</location>
        <location evidence="1">Cilium</location>
    </subcellularLocation>
    <subcellularLocation>
        <location evidence="1">Cytoplasmic granule</location>
    </subcellularLocation>
    <subcellularLocation>
        <location evidence="1">Cytoplasm</location>
    </subcellularLocation>
    <subcellularLocation>
        <location evidence="2">Cytoplasmic vesicle</location>
        <location evidence="2">Secretory vesicle</location>
        <location evidence="2">Acrosome</location>
    </subcellularLocation>
    <subcellularLocation>
        <location evidence="2">Cell projection</location>
        <location evidence="2">Cilium</location>
        <location evidence="2">Flagellum</location>
    </subcellularLocation>
</comment>
<comment type="alternative products">
    <event type="alternative splicing"/>
    <isoform>
        <id>Q92075-1</id>
        <name>Long</name>
        <sequence type="displayed"/>
    </isoform>
    <isoform>
        <id>Q92075-2</id>
        <name>Short</name>
        <sequence type="described" ref="VSP_006196 VSP_006197"/>
    </isoform>
    <isoform>
        <id>Q92075-3</id>
        <name>3</name>
        <sequence type="described" ref="VSP_057562"/>
    </isoform>
</comment>
<comment type="tissue specificity">
    <text evidence="5">The long isoform has been found in cochlea, colon, and cartilage. The short isoform is only found in cochlea.</text>
</comment>
<comment type="similarity">
    <text evidence="7">Belongs to the amiloride-sensitive sodium channel (TC 1.A.6) family. SCNN1A subfamily.</text>
</comment>
<gene>
    <name evidence="1" type="primary">SCNN1A</name>
    <name evidence="6" type="synonym">ENAC</name>
</gene>
<name>SCNNA_CHICK</name>
<dbReference type="EMBL" id="U62902">
    <property type="protein sequence ID" value="AAB50550.1"/>
    <property type="molecule type" value="mRNA"/>
</dbReference>
<dbReference type="EMBL" id="U62903">
    <property type="protein sequence ID" value="AAB50551.1"/>
    <property type="molecule type" value="mRNA"/>
</dbReference>
<dbReference type="EMBL" id="U62904">
    <property type="protein sequence ID" value="AAB50552.1"/>
    <property type="molecule type" value="mRNA"/>
</dbReference>
<dbReference type="EMBL" id="U58475">
    <property type="protein sequence ID" value="AAB04954.1"/>
    <property type="molecule type" value="mRNA"/>
</dbReference>
<dbReference type="RefSeq" id="NP_990476.2">
    <property type="nucleotide sequence ID" value="NM_205145.2"/>
</dbReference>
<dbReference type="SMR" id="Q92075"/>
<dbReference type="FunCoup" id="Q92075">
    <property type="interactions" value="13"/>
</dbReference>
<dbReference type="STRING" id="9031.ENSGALP00000046969"/>
<dbReference type="PaxDb" id="9031-ENSGALP00000022994"/>
<dbReference type="GeneID" id="396050"/>
<dbReference type="KEGG" id="gga:396050"/>
<dbReference type="CTD" id="6337"/>
<dbReference type="VEuPathDB" id="HostDB:geneid_396050"/>
<dbReference type="eggNOG" id="KOG4294">
    <property type="taxonomic scope" value="Eukaryota"/>
</dbReference>
<dbReference type="InParanoid" id="Q92075"/>
<dbReference type="OrthoDB" id="6238402at2759"/>
<dbReference type="PhylomeDB" id="Q92075"/>
<dbReference type="PRO" id="PR:Q92075"/>
<dbReference type="Proteomes" id="UP000000539">
    <property type="component" value="Unassembled WGS sequence"/>
</dbReference>
<dbReference type="GO" id="GO:0001669">
    <property type="term" value="C:acrosomal vesicle"/>
    <property type="evidence" value="ECO:0007669"/>
    <property type="project" value="UniProtKB-SubCell"/>
</dbReference>
<dbReference type="GO" id="GO:0016324">
    <property type="term" value="C:apical plasma membrane"/>
    <property type="evidence" value="ECO:0000250"/>
    <property type="project" value="UniProtKB"/>
</dbReference>
<dbReference type="GO" id="GO:0060170">
    <property type="term" value="C:ciliary membrane"/>
    <property type="evidence" value="ECO:0000250"/>
    <property type="project" value="UniProtKB"/>
</dbReference>
<dbReference type="GO" id="GO:0005737">
    <property type="term" value="C:cytoplasm"/>
    <property type="evidence" value="ECO:0000250"/>
    <property type="project" value="UniProtKB"/>
</dbReference>
<dbReference type="GO" id="GO:0031514">
    <property type="term" value="C:motile cilium"/>
    <property type="evidence" value="ECO:0000250"/>
    <property type="project" value="UniProtKB"/>
</dbReference>
<dbReference type="GO" id="GO:0005886">
    <property type="term" value="C:plasma membrane"/>
    <property type="evidence" value="ECO:0000250"/>
    <property type="project" value="UniProtKB"/>
</dbReference>
<dbReference type="GO" id="GO:0034706">
    <property type="term" value="C:sodium channel complex"/>
    <property type="evidence" value="ECO:0000250"/>
    <property type="project" value="UniProtKB"/>
</dbReference>
<dbReference type="GO" id="GO:0015280">
    <property type="term" value="F:ligand-gated sodium channel activity"/>
    <property type="evidence" value="ECO:0000318"/>
    <property type="project" value="GO_Central"/>
</dbReference>
<dbReference type="GO" id="GO:0050891">
    <property type="term" value="P:multicellular organismal-level water homeostasis"/>
    <property type="evidence" value="ECO:0000250"/>
    <property type="project" value="UniProtKB"/>
</dbReference>
<dbReference type="GO" id="GO:0055078">
    <property type="term" value="P:sodium ion homeostasis"/>
    <property type="evidence" value="ECO:0000250"/>
    <property type="project" value="UniProtKB"/>
</dbReference>
<dbReference type="GO" id="GO:0035725">
    <property type="term" value="P:sodium ion transmembrane transport"/>
    <property type="evidence" value="ECO:0000250"/>
    <property type="project" value="UniProtKB"/>
</dbReference>
<dbReference type="FunFam" id="2.60.470.10:FF:000002">
    <property type="entry name" value="Amiloride-sensitive sodium channel subunit alpha"/>
    <property type="match status" value="1"/>
</dbReference>
<dbReference type="FunFam" id="1.10.287.770:FF:000002">
    <property type="entry name" value="Amiloride-sensitive sodium channel subunit beta 1"/>
    <property type="match status" value="1"/>
</dbReference>
<dbReference type="Gene3D" id="2.60.470.10">
    <property type="entry name" value="Acid-sensing ion channels like domains"/>
    <property type="match status" value="1"/>
</dbReference>
<dbReference type="Gene3D" id="1.10.287.770">
    <property type="entry name" value="YojJ-like"/>
    <property type="match status" value="1"/>
</dbReference>
<dbReference type="InterPro" id="IPR001873">
    <property type="entry name" value="ENaC"/>
</dbReference>
<dbReference type="InterPro" id="IPR004724">
    <property type="entry name" value="ENaC_chordates"/>
</dbReference>
<dbReference type="InterPro" id="IPR020903">
    <property type="entry name" value="ENaC_CS"/>
</dbReference>
<dbReference type="NCBIfam" id="TIGR00859">
    <property type="entry name" value="ENaC"/>
    <property type="match status" value="1"/>
</dbReference>
<dbReference type="PANTHER" id="PTHR11690:SF124">
    <property type="entry name" value="AMILORIDE-SENSITIVE SODIUM CHANNEL SUBUNIT ALPHA"/>
    <property type="match status" value="1"/>
</dbReference>
<dbReference type="PANTHER" id="PTHR11690">
    <property type="entry name" value="AMILORIDE-SENSITIVE SODIUM CHANNEL-RELATED"/>
    <property type="match status" value="1"/>
</dbReference>
<dbReference type="Pfam" id="PF00858">
    <property type="entry name" value="ASC"/>
    <property type="match status" value="1"/>
</dbReference>
<dbReference type="PRINTS" id="PR01078">
    <property type="entry name" value="AMINACHANNEL"/>
</dbReference>
<dbReference type="PROSITE" id="PS01206">
    <property type="entry name" value="ASC"/>
    <property type="match status" value="1"/>
</dbReference>
<organism>
    <name type="scientific">Gallus gallus</name>
    <name type="common">Chicken</name>
    <dbReference type="NCBI Taxonomy" id="9031"/>
    <lineage>
        <taxon>Eukaryota</taxon>
        <taxon>Metazoa</taxon>
        <taxon>Chordata</taxon>
        <taxon>Craniata</taxon>
        <taxon>Vertebrata</taxon>
        <taxon>Euteleostomi</taxon>
        <taxon>Archelosauria</taxon>
        <taxon>Archosauria</taxon>
        <taxon>Dinosauria</taxon>
        <taxon>Saurischia</taxon>
        <taxon>Theropoda</taxon>
        <taxon>Coelurosauria</taxon>
        <taxon>Aves</taxon>
        <taxon>Neognathae</taxon>
        <taxon>Galloanserae</taxon>
        <taxon>Galliformes</taxon>
        <taxon>Phasianidae</taxon>
        <taxon>Phasianinae</taxon>
        <taxon>Gallus</taxon>
    </lineage>
</organism>
<keyword id="KW-0025">Alternative splicing</keyword>
<keyword id="KW-1003">Cell membrane</keyword>
<keyword id="KW-0966">Cell projection</keyword>
<keyword id="KW-0969">Cilium</keyword>
<keyword id="KW-0963">Cytoplasm</keyword>
<keyword id="KW-0968">Cytoplasmic vesicle</keyword>
<keyword id="KW-1015">Disulfide bond</keyword>
<keyword id="KW-0282">Flagellum</keyword>
<keyword id="KW-0407">Ion channel</keyword>
<keyword id="KW-0406">Ion transport</keyword>
<keyword id="KW-0472">Membrane</keyword>
<keyword id="KW-1185">Reference proteome</keyword>
<keyword id="KW-0915">Sodium</keyword>
<keyword id="KW-0894">Sodium channel</keyword>
<keyword id="KW-0739">Sodium transport</keyword>
<keyword id="KW-0812">Transmembrane</keyword>
<keyword id="KW-1133">Transmembrane helix</keyword>
<keyword id="KW-0813">Transport</keyword>